<sequence length="201" mass="22580">MTDISAVAGQPALVRNELNLVWLDMEMTGLDPDTDRIIEIAVVVTNSTLDIAVEGPVLAIHQSDETLAKMDDWNKNTHGRSGLIDRVRASSVTEADAAAQIAAFLAEHVPPGKSPMCGNSICQDRRFMARWMPELERFFHYRNLDVSTLKELCRRWQPAIYKGFQKRAMHTALADIHESIDELKYYRERFLIPAAPAGETA</sequence>
<dbReference type="EC" id="3.1.15.-" evidence="1"/>
<dbReference type="EMBL" id="CP000526">
    <property type="protein sequence ID" value="ABM49781.1"/>
    <property type="molecule type" value="Genomic_DNA"/>
</dbReference>
<dbReference type="RefSeq" id="WP_004189767.1">
    <property type="nucleotide sequence ID" value="NC_008785.1"/>
</dbReference>
<dbReference type="SMR" id="A1V6I4"/>
<dbReference type="GeneID" id="92978164"/>
<dbReference type="KEGG" id="bmv:BMASAVP1_A2535"/>
<dbReference type="HOGENOM" id="CLU_064761_2_0_4"/>
<dbReference type="GO" id="GO:0005737">
    <property type="term" value="C:cytoplasm"/>
    <property type="evidence" value="ECO:0007669"/>
    <property type="project" value="UniProtKB-SubCell"/>
</dbReference>
<dbReference type="GO" id="GO:0000175">
    <property type="term" value="F:3'-5'-RNA exonuclease activity"/>
    <property type="evidence" value="ECO:0007669"/>
    <property type="project" value="InterPro"/>
</dbReference>
<dbReference type="GO" id="GO:0003676">
    <property type="term" value="F:nucleic acid binding"/>
    <property type="evidence" value="ECO:0007669"/>
    <property type="project" value="InterPro"/>
</dbReference>
<dbReference type="GO" id="GO:0006259">
    <property type="term" value="P:DNA metabolic process"/>
    <property type="evidence" value="ECO:0007669"/>
    <property type="project" value="UniProtKB-ARBA"/>
</dbReference>
<dbReference type="CDD" id="cd06135">
    <property type="entry name" value="Orn"/>
    <property type="match status" value="1"/>
</dbReference>
<dbReference type="FunFam" id="3.30.420.10:FF:000003">
    <property type="entry name" value="Oligoribonuclease"/>
    <property type="match status" value="1"/>
</dbReference>
<dbReference type="Gene3D" id="3.30.420.10">
    <property type="entry name" value="Ribonuclease H-like superfamily/Ribonuclease H"/>
    <property type="match status" value="1"/>
</dbReference>
<dbReference type="HAMAP" id="MF_00045">
    <property type="entry name" value="Oligoribonuclease"/>
    <property type="match status" value="1"/>
</dbReference>
<dbReference type="InterPro" id="IPR013520">
    <property type="entry name" value="Exonuclease_RNaseT/DNA_pol3"/>
</dbReference>
<dbReference type="InterPro" id="IPR022894">
    <property type="entry name" value="Oligoribonuclease"/>
</dbReference>
<dbReference type="InterPro" id="IPR012337">
    <property type="entry name" value="RNaseH-like_sf"/>
</dbReference>
<dbReference type="InterPro" id="IPR036397">
    <property type="entry name" value="RNaseH_sf"/>
</dbReference>
<dbReference type="NCBIfam" id="NF003765">
    <property type="entry name" value="PRK05359.1"/>
    <property type="match status" value="1"/>
</dbReference>
<dbReference type="PANTHER" id="PTHR11046">
    <property type="entry name" value="OLIGORIBONUCLEASE, MITOCHONDRIAL"/>
    <property type="match status" value="1"/>
</dbReference>
<dbReference type="PANTHER" id="PTHR11046:SF0">
    <property type="entry name" value="OLIGORIBONUCLEASE, MITOCHONDRIAL"/>
    <property type="match status" value="1"/>
</dbReference>
<dbReference type="Pfam" id="PF00929">
    <property type="entry name" value="RNase_T"/>
    <property type="match status" value="1"/>
</dbReference>
<dbReference type="SMART" id="SM00479">
    <property type="entry name" value="EXOIII"/>
    <property type="match status" value="1"/>
</dbReference>
<dbReference type="SUPFAM" id="SSF53098">
    <property type="entry name" value="Ribonuclease H-like"/>
    <property type="match status" value="1"/>
</dbReference>
<reference key="1">
    <citation type="journal article" date="2010" name="Genome Biol. Evol.">
        <title>Continuing evolution of Burkholderia mallei through genome reduction and large-scale rearrangements.</title>
        <authorList>
            <person name="Losada L."/>
            <person name="Ronning C.M."/>
            <person name="DeShazer D."/>
            <person name="Woods D."/>
            <person name="Fedorova N."/>
            <person name="Kim H.S."/>
            <person name="Shabalina S.A."/>
            <person name="Pearson T.R."/>
            <person name="Brinkac L."/>
            <person name="Tan P."/>
            <person name="Nandi T."/>
            <person name="Crabtree J."/>
            <person name="Badger J."/>
            <person name="Beckstrom-Sternberg S."/>
            <person name="Saqib M."/>
            <person name="Schutzer S.E."/>
            <person name="Keim P."/>
            <person name="Nierman W.C."/>
        </authorList>
    </citation>
    <scope>NUCLEOTIDE SEQUENCE [LARGE SCALE GENOMIC DNA]</scope>
    <source>
        <strain>SAVP1</strain>
    </source>
</reference>
<organism>
    <name type="scientific">Burkholderia mallei (strain SAVP1)</name>
    <dbReference type="NCBI Taxonomy" id="320388"/>
    <lineage>
        <taxon>Bacteria</taxon>
        <taxon>Pseudomonadati</taxon>
        <taxon>Pseudomonadota</taxon>
        <taxon>Betaproteobacteria</taxon>
        <taxon>Burkholderiales</taxon>
        <taxon>Burkholderiaceae</taxon>
        <taxon>Burkholderia</taxon>
        <taxon>pseudomallei group</taxon>
    </lineage>
</organism>
<proteinExistence type="inferred from homology"/>
<keyword id="KW-0963">Cytoplasm</keyword>
<keyword id="KW-0269">Exonuclease</keyword>
<keyword id="KW-0378">Hydrolase</keyword>
<keyword id="KW-0540">Nuclease</keyword>
<feature type="chain" id="PRO_1000004237" description="Oligoribonuclease">
    <location>
        <begin position="1"/>
        <end position="201"/>
    </location>
</feature>
<feature type="domain" description="Exonuclease" evidence="1">
    <location>
        <begin position="20"/>
        <end position="183"/>
    </location>
</feature>
<feature type="active site" evidence="1">
    <location>
        <position position="141"/>
    </location>
</feature>
<protein>
    <recommendedName>
        <fullName evidence="1">Oligoribonuclease</fullName>
        <ecNumber evidence="1">3.1.15.-</ecNumber>
    </recommendedName>
</protein>
<accession>A1V6I4</accession>
<name>ORN_BURMS</name>
<gene>
    <name evidence="1" type="primary">orn</name>
    <name type="ordered locus">BMASAVP1_A2535</name>
</gene>
<evidence type="ECO:0000255" key="1">
    <source>
        <dbReference type="HAMAP-Rule" id="MF_00045"/>
    </source>
</evidence>
<comment type="function">
    <text evidence="1">3'-to-5' exoribonuclease specific for small oligoribonucleotides.</text>
</comment>
<comment type="subcellular location">
    <subcellularLocation>
        <location evidence="1">Cytoplasm</location>
    </subcellularLocation>
</comment>
<comment type="similarity">
    <text evidence="1">Belongs to the oligoribonuclease family.</text>
</comment>